<comment type="function">
    <text evidence="1">Plays an important role in the regulation of embryonic development, cell proliferation and cell differentiation, and is required for normal cardiomyocyte proliferation and heart development.</text>
</comment>
<comment type="subunit">
    <text evidence="1">Interacts with FGFR1 and FGFR2.</text>
</comment>
<comment type="subcellular location">
    <subcellularLocation>
        <location evidence="2">Secreted</location>
    </subcellularLocation>
</comment>
<comment type="similarity">
    <text evidence="4">Belongs to the heparin-binding growth factors family.</text>
</comment>
<keyword id="KW-0325">Glycoprotein</keyword>
<keyword id="KW-0339">Growth factor</keyword>
<keyword id="KW-0597">Phosphoprotein</keyword>
<keyword id="KW-1185">Reference proteome</keyword>
<keyword id="KW-0964">Secreted</keyword>
<accession>Q9ESL8</accession>
<accession>A2RTU5</accession>
<accession>Q9ERQ5</accession>
<dbReference type="EMBL" id="AB049219">
    <property type="protein sequence ID" value="BAB16405.1"/>
    <property type="molecule type" value="mRNA"/>
</dbReference>
<dbReference type="EMBL" id="AF292104">
    <property type="protein sequence ID" value="AAG29501.1"/>
    <property type="molecule type" value="mRNA"/>
</dbReference>
<dbReference type="EMBL" id="CH466564">
    <property type="protein sequence ID" value="EDL14069.1"/>
    <property type="molecule type" value="Genomic_DNA"/>
</dbReference>
<dbReference type="EMBL" id="BC132641">
    <property type="protein sequence ID" value="AAI32642.1"/>
    <property type="molecule type" value="mRNA"/>
</dbReference>
<dbReference type="EMBL" id="BC137993">
    <property type="protein sequence ID" value="AAI37994.1"/>
    <property type="molecule type" value="mRNA"/>
</dbReference>
<dbReference type="CCDS" id="CCDS30336.1"/>
<dbReference type="RefSeq" id="NP_085117.2">
    <property type="nucleotide sequence ID" value="NM_030614.2"/>
</dbReference>
<dbReference type="SMR" id="Q9ESL8"/>
<dbReference type="FunCoup" id="Q9ESL8">
    <property type="interactions" value="948"/>
</dbReference>
<dbReference type="STRING" id="10090.ENSMUSP00000033581"/>
<dbReference type="GlyCosmos" id="Q9ESL8">
    <property type="glycosylation" value="1 site, No reported glycans"/>
</dbReference>
<dbReference type="GlyGen" id="Q9ESL8">
    <property type="glycosylation" value="1 site, 1 N-linked glycan (1 site)"/>
</dbReference>
<dbReference type="iPTMnet" id="Q9ESL8"/>
<dbReference type="PhosphoSitePlus" id="Q9ESL8"/>
<dbReference type="PaxDb" id="10090-ENSMUSP00000033581"/>
<dbReference type="Antibodypedia" id="72310">
    <property type="antibodies" value="252 antibodies from 27 providers"/>
</dbReference>
<dbReference type="DNASU" id="80903"/>
<dbReference type="Ensembl" id="ENSMUST00000033581.4">
    <property type="protein sequence ID" value="ENSMUSP00000033581.4"/>
    <property type="gene ID" value="ENSMUSG00000031230.4"/>
</dbReference>
<dbReference type="GeneID" id="80903"/>
<dbReference type="KEGG" id="mmu:80903"/>
<dbReference type="UCSC" id="uc009uba.1">
    <property type="organism name" value="mouse"/>
</dbReference>
<dbReference type="AGR" id="MGI:1931627"/>
<dbReference type="CTD" id="8823"/>
<dbReference type="MGI" id="MGI:1931627">
    <property type="gene designation" value="Fgf16"/>
</dbReference>
<dbReference type="VEuPathDB" id="HostDB:ENSMUSG00000031230"/>
<dbReference type="eggNOG" id="KOG3885">
    <property type="taxonomic scope" value="Eukaryota"/>
</dbReference>
<dbReference type="GeneTree" id="ENSGT00940000160087"/>
<dbReference type="HOGENOM" id="CLU_081609_0_0_1"/>
<dbReference type="InParanoid" id="Q9ESL8"/>
<dbReference type="OMA" id="MDSERHY"/>
<dbReference type="OrthoDB" id="6158176at2759"/>
<dbReference type="PhylomeDB" id="Q9ESL8"/>
<dbReference type="TreeFam" id="TF317805"/>
<dbReference type="Reactome" id="R-MMU-109704">
    <property type="pathway name" value="PI3K Cascade"/>
</dbReference>
<dbReference type="Reactome" id="R-MMU-1257604">
    <property type="pathway name" value="PIP3 activates AKT signaling"/>
</dbReference>
<dbReference type="Reactome" id="R-MMU-190322">
    <property type="pathway name" value="FGFR4 ligand binding and activation"/>
</dbReference>
<dbReference type="Reactome" id="R-MMU-190372">
    <property type="pathway name" value="FGFR3c ligand binding and activation"/>
</dbReference>
<dbReference type="Reactome" id="R-MMU-190375">
    <property type="pathway name" value="FGFR2c ligand binding and activation"/>
</dbReference>
<dbReference type="Reactome" id="R-MMU-5654221">
    <property type="pathway name" value="Phospholipase C-mediated cascade, FGFR2"/>
</dbReference>
<dbReference type="Reactome" id="R-MMU-5654227">
    <property type="pathway name" value="Phospholipase C-mediated cascade, FGFR3"/>
</dbReference>
<dbReference type="Reactome" id="R-MMU-5654228">
    <property type="pathway name" value="Phospholipase C-mediated cascade, FGFR4"/>
</dbReference>
<dbReference type="Reactome" id="R-MMU-5654695">
    <property type="pathway name" value="PI-3K cascade:FGFR2"/>
</dbReference>
<dbReference type="Reactome" id="R-MMU-5654699">
    <property type="pathway name" value="SHC-mediated cascade:FGFR2"/>
</dbReference>
<dbReference type="Reactome" id="R-MMU-5654700">
    <property type="pathway name" value="FRS-mediated FGFR2 signaling"/>
</dbReference>
<dbReference type="Reactome" id="R-MMU-5654704">
    <property type="pathway name" value="SHC-mediated cascade:FGFR3"/>
</dbReference>
<dbReference type="Reactome" id="R-MMU-5654706">
    <property type="pathway name" value="FRS-mediated FGFR3 signaling"/>
</dbReference>
<dbReference type="Reactome" id="R-MMU-5654710">
    <property type="pathway name" value="PI-3K cascade:FGFR3"/>
</dbReference>
<dbReference type="Reactome" id="R-MMU-5654712">
    <property type="pathway name" value="FRS-mediated FGFR4 signaling"/>
</dbReference>
<dbReference type="Reactome" id="R-MMU-5654719">
    <property type="pathway name" value="SHC-mediated cascade:FGFR4"/>
</dbReference>
<dbReference type="Reactome" id="R-MMU-5654720">
    <property type="pathway name" value="PI-3K cascade:FGFR4"/>
</dbReference>
<dbReference type="Reactome" id="R-MMU-5654727">
    <property type="pathway name" value="Negative regulation of FGFR2 signaling"/>
</dbReference>
<dbReference type="Reactome" id="R-MMU-5654732">
    <property type="pathway name" value="Negative regulation of FGFR3 signaling"/>
</dbReference>
<dbReference type="Reactome" id="R-MMU-5654733">
    <property type="pathway name" value="Negative regulation of FGFR4 signaling"/>
</dbReference>
<dbReference type="Reactome" id="R-MMU-5673001">
    <property type="pathway name" value="RAF/MAP kinase cascade"/>
</dbReference>
<dbReference type="Reactome" id="R-MMU-6811558">
    <property type="pathway name" value="PI5P, PP2A and IER3 Regulate PI3K/AKT Signaling"/>
</dbReference>
<dbReference type="BioGRID-ORCS" id="80903">
    <property type="hits" value="1 hit in 77 CRISPR screens"/>
</dbReference>
<dbReference type="PRO" id="PR:Q9ESL8"/>
<dbReference type="Proteomes" id="UP000000589">
    <property type="component" value="Chromosome X"/>
</dbReference>
<dbReference type="RNAct" id="Q9ESL8">
    <property type="molecule type" value="protein"/>
</dbReference>
<dbReference type="Bgee" id="ENSMUSG00000031230">
    <property type="expression patterns" value="Expressed in mesenchyme of tongue and 39 other cell types or tissues"/>
</dbReference>
<dbReference type="GO" id="GO:0005576">
    <property type="term" value="C:extracellular region"/>
    <property type="evidence" value="ECO:0007669"/>
    <property type="project" value="UniProtKB-SubCell"/>
</dbReference>
<dbReference type="GO" id="GO:0005104">
    <property type="term" value="F:fibroblast growth factor receptor binding"/>
    <property type="evidence" value="ECO:0000266"/>
    <property type="project" value="MGI"/>
</dbReference>
<dbReference type="GO" id="GO:0008083">
    <property type="term" value="F:growth factor activity"/>
    <property type="evidence" value="ECO:0007669"/>
    <property type="project" value="UniProtKB-KW"/>
</dbReference>
<dbReference type="GO" id="GO:0008543">
    <property type="term" value="P:fibroblast growth factor receptor signaling pathway"/>
    <property type="evidence" value="ECO:0000266"/>
    <property type="project" value="MGI"/>
</dbReference>
<dbReference type="GO" id="GO:0070349">
    <property type="term" value="P:positive regulation of brown fat cell proliferation"/>
    <property type="evidence" value="ECO:0000266"/>
    <property type="project" value="MGI"/>
</dbReference>
<dbReference type="GO" id="GO:2000546">
    <property type="term" value="P:positive regulation of endothelial cell chemotaxis to fibroblast growth factor"/>
    <property type="evidence" value="ECO:0007669"/>
    <property type="project" value="Ensembl"/>
</dbReference>
<dbReference type="CDD" id="cd23326">
    <property type="entry name" value="beta-trefoil_FGF16"/>
    <property type="match status" value="1"/>
</dbReference>
<dbReference type="FunFam" id="2.80.10.50:FF:000004">
    <property type="entry name" value="Fibroblast growth factor"/>
    <property type="match status" value="1"/>
</dbReference>
<dbReference type="Gene3D" id="2.80.10.50">
    <property type="match status" value="1"/>
</dbReference>
<dbReference type="InterPro" id="IPR002209">
    <property type="entry name" value="Fibroblast_GF_fam"/>
</dbReference>
<dbReference type="InterPro" id="IPR008996">
    <property type="entry name" value="IL1/FGF"/>
</dbReference>
<dbReference type="PANTHER" id="PTHR11486">
    <property type="entry name" value="FIBROBLAST GROWTH FACTOR"/>
    <property type="match status" value="1"/>
</dbReference>
<dbReference type="Pfam" id="PF00167">
    <property type="entry name" value="FGF"/>
    <property type="match status" value="1"/>
</dbReference>
<dbReference type="PRINTS" id="PR00263">
    <property type="entry name" value="HBGFFGF"/>
</dbReference>
<dbReference type="PRINTS" id="PR00262">
    <property type="entry name" value="IL1HBGF"/>
</dbReference>
<dbReference type="SMART" id="SM00442">
    <property type="entry name" value="FGF"/>
    <property type="match status" value="1"/>
</dbReference>
<dbReference type="SUPFAM" id="SSF50353">
    <property type="entry name" value="Cytokine"/>
    <property type="match status" value="1"/>
</dbReference>
<dbReference type="PROSITE" id="PS00247">
    <property type="entry name" value="HBGF_FGF"/>
    <property type="match status" value="1"/>
</dbReference>
<reference key="1">
    <citation type="submission" date="2000-09" db="EMBL/GenBank/DDBJ databases">
        <authorList>
            <person name="Itoh N."/>
        </authorList>
    </citation>
    <scope>NUCLEOTIDE SEQUENCE [MRNA]</scope>
</reference>
<reference key="2">
    <citation type="journal article" date="2003" name="Mol. Cell. Biochem.">
        <title>Cloning and bacterial expression of postnatal mouse heart FGF-16.</title>
        <authorList>
            <person name="Sontag D.P."/>
            <person name="Cattini P.A."/>
        </authorList>
    </citation>
    <scope>NUCLEOTIDE SEQUENCE [MRNA]</scope>
    <source>
        <tissue>Heart</tissue>
    </source>
</reference>
<reference key="3">
    <citation type="submission" date="2005-09" db="EMBL/GenBank/DDBJ databases">
        <authorList>
            <person name="Mural R.J."/>
            <person name="Adams M.D."/>
            <person name="Myers E.W."/>
            <person name="Smith H.O."/>
            <person name="Venter J.C."/>
        </authorList>
    </citation>
    <scope>NUCLEOTIDE SEQUENCE [LARGE SCALE GENOMIC DNA]</scope>
</reference>
<reference key="4">
    <citation type="journal article" date="2004" name="Genome Res.">
        <title>The status, quality, and expansion of the NIH full-length cDNA project: the Mammalian Gene Collection (MGC).</title>
        <authorList>
            <consortium name="The MGC Project Team"/>
        </authorList>
    </citation>
    <scope>NUCLEOTIDE SEQUENCE [LARGE SCALE MRNA]</scope>
</reference>
<evidence type="ECO:0000250" key="1">
    <source>
        <dbReference type="UniProtKB" id="O43320"/>
    </source>
</evidence>
<evidence type="ECO:0000250" key="2">
    <source>
        <dbReference type="UniProtKB" id="O54769"/>
    </source>
</evidence>
<evidence type="ECO:0000255" key="3"/>
<evidence type="ECO:0000305" key="4"/>
<name>FGF16_MOUSE</name>
<gene>
    <name type="primary">Fgf16</name>
</gene>
<feature type="chain" id="PRO_0000147614" description="Fibroblast growth factor 16">
    <location>
        <begin position="1"/>
        <end position="207"/>
    </location>
</feature>
<feature type="modified residue" description="Phosphoserine" evidence="1">
    <location>
        <position position="111"/>
    </location>
</feature>
<feature type="glycosylation site" description="N-linked (GlcNAc...) asparagine" evidence="3">
    <location>
        <position position="78"/>
    </location>
</feature>
<feature type="sequence conflict" description="In Ref. 2; AAG29501." evidence="4" ref="2">
    <original>H</original>
    <variation>Q</variation>
    <location>
        <position position="16"/>
    </location>
</feature>
<feature type="sequence conflict" description="In Ref. 2; AAG29501." evidence="4" ref="2">
    <original>T</original>
    <variation>A</variation>
    <location>
        <position position="150"/>
    </location>
</feature>
<protein>
    <recommendedName>
        <fullName>Fibroblast growth factor 16</fullName>
        <shortName>FGF-16</shortName>
    </recommendedName>
</protein>
<sequence length="207" mass="23778">MAEVGGVFASLDWDLHGFSSSLGNVPLADSPGFLNERLGQIEGKLQRGSPTDFAHLKGILRRRQLYCRTGFHLEIFPNGTVHGTRHDHSRFGILEFISLAVGLISIRGVDSGLYLGMNERGELYGSKKLTRECVFREQFEENWYNTYASTLYKHSDSERQYYVALNKDGSPREGYRTKRHQKFTHFLPRPVDPSKLPSMSRDLFRYR</sequence>
<proteinExistence type="evidence at transcript level"/>
<organism>
    <name type="scientific">Mus musculus</name>
    <name type="common">Mouse</name>
    <dbReference type="NCBI Taxonomy" id="10090"/>
    <lineage>
        <taxon>Eukaryota</taxon>
        <taxon>Metazoa</taxon>
        <taxon>Chordata</taxon>
        <taxon>Craniata</taxon>
        <taxon>Vertebrata</taxon>
        <taxon>Euteleostomi</taxon>
        <taxon>Mammalia</taxon>
        <taxon>Eutheria</taxon>
        <taxon>Euarchontoglires</taxon>
        <taxon>Glires</taxon>
        <taxon>Rodentia</taxon>
        <taxon>Myomorpha</taxon>
        <taxon>Muroidea</taxon>
        <taxon>Muridae</taxon>
        <taxon>Murinae</taxon>
        <taxon>Mus</taxon>
        <taxon>Mus</taxon>
    </lineage>
</organism>